<gene>
    <name type="primary">vibA</name>
    <name type="ordered locus">VC_0774</name>
</gene>
<dbReference type="EC" id="1.3.1.28"/>
<dbReference type="EMBL" id="U52150">
    <property type="protein sequence ID" value="AAC45924.1"/>
    <property type="molecule type" value="Genomic_DNA"/>
</dbReference>
<dbReference type="EMBL" id="AE003852">
    <property type="protein sequence ID" value="AAF93939.1"/>
    <property type="molecule type" value="Genomic_DNA"/>
</dbReference>
<dbReference type="PIR" id="G82280">
    <property type="entry name" value="G82280"/>
</dbReference>
<dbReference type="RefSeq" id="NP_230423.1">
    <property type="nucleotide sequence ID" value="NC_002505.1"/>
</dbReference>
<dbReference type="SMR" id="Q56632"/>
<dbReference type="STRING" id="243277.VC_0774"/>
<dbReference type="DNASU" id="2615317"/>
<dbReference type="EnsemblBacteria" id="AAF93939">
    <property type="protein sequence ID" value="AAF93939"/>
    <property type="gene ID" value="VC_0774"/>
</dbReference>
<dbReference type="KEGG" id="vch:VC_0774"/>
<dbReference type="PATRIC" id="fig|243277.26.peg.738"/>
<dbReference type="eggNOG" id="COG1028">
    <property type="taxonomic scope" value="Bacteria"/>
</dbReference>
<dbReference type="HOGENOM" id="CLU_010194_1_0_6"/>
<dbReference type="BioCyc" id="MetaCyc:VC0774-MONOMER"/>
<dbReference type="UniPathway" id="UPA00022"/>
<dbReference type="Proteomes" id="UP000000584">
    <property type="component" value="Chromosome 1"/>
</dbReference>
<dbReference type="GO" id="GO:0008667">
    <property type="term" value="F:2,3-dihydro-2,3-dihydroxybenzoate dehydrogenase activity"/>
    <property type="evidence" value="ECO:0007669"/>
    <property type="project" value="UniProtKB-EC"/>
</dbReference>
<dbReference type="GO" id="GO:0016616">
    <property type="term" value="F:oxidoreductase activity, acting on the CH-OH group of donors, NAD or NADP as acceptor"/>
    <property type="evidence" value="ECO:0000318"/>
    <property type="project" value="GO_Central"/>
</dbReference>
<dbReference type="GO" id="GO:0019290">
    <property type="term" value="P:siderophore biosynthetic process"/>
    <property type="evidence" value="ECO:0007669"/>
    <property type="project" value="InterPro"/>
</dbReference>
<dbReference type="GO" id="GO:0019537">
    <property type="term" value="P:vibriobactin biosynthetic process"/>
    <property type="evidence" value="ECO:0007669"/>
    <property type="project" value="UniProtKB-UniPathway"/>
</dbReference>
<dbReference type="CDD" id="cd05331">
    <property type="entry name" value="DH-DHB-DH_SDR_c"/>
    <property type="match status" value="1"/>
</dbReference>
<dbReference type="FunFam" id="3.40.50.720:FF:000084">
    <property type="entry name" value="Short-chain dehydrogenase reductase"/>
    <property type="match status" value="1"/>
</dbReference>
<dbReference type="Gene3D" id="3.40.50.720">
    <property type="entry name" value="NAD(P)-binding Rossmann-like Domain"/>
    <property type="match status" value="1"/>
</dbReference>
<dbReference type="InterPro" id="IPR003560">
    <property type="entry name" value="DHB_DH"/>
</dbReference>
<dbReference type="InterPro" id="IPR036291">
    <property type="entry name" value="NAD(P)-bd_dom_sf"/>
</dbReference>
<dbReference type="InterPro" id="IPR020904">
    <property type="entry name" value="Sc_DH/Rdtase_CS"/>
</dbReference>
<dbReference type="InterPro" id="IPR002347">
    <property type="entry name" value="SDR_fam"/>
</dbReference>
<dbReference type="InterPro" id="IPR051122">
    <property type="entry name" value="SDR_superfamily_enzyme"/>
</dbReference>
<dbReference type="NCBIfam" id="TIGR04316">
    <property type="entry name" value="dhbA_paeA"/>
    <property type="match status" value="1"/>
</dbReference>
<dbReference type="NCBIfam" id="NF006074">
    <property type="entry name" value="PRK08220.1"/>
    <property type="match status" value="1"/>
</dbReference>
<dbReference type="PANTHER" id="PTHR43477">
    <property type="entry name" value="DIHYDROANTICAPSIN 7-DEHYDROGENASE"/>
    <property type="match status" value="1"/>
</dbReference>
<dbReference type="PANTHER" id="PTHR43477:SF1">
    <property type="entry name" value="DIHYDROANTICAPSIN 7-DEHYDROGENASE"/>
    <property type="match status" value="1"/>
</dbReference>
<dbReference type="Pfam" id="PF13561">
    <property type="entry name" value="adh_short_C2"/>
    <property type="match status" value="1"/>
</dbReference>
<dbReference type="PRINTS" id="PR01397">
    <property type="entry name" value="DHBDHDRGNASE"/>
</dbReference>
<dbReference type="SUPFAM" id="SSF51735">
    <property type="entry name" value="NAD(P)-binding Rossmann-fold domains"/>
    <property type="match status" value="1"/>
</dbReference>
<dbReference type="PROSITE" id="PS00061">
    <property type="entry name" value="ADH_SHORT"/>
    <property type="match status" value="1"/>
</dbReference>
<accession>Q56632</accession>
<accession>Q9JQ08</accession>
<protein>
    <recommendedName>
        <fullName>Vibriobactin-specific 2,3-dihydro-2,3-dihydroxybenzoate dehydrogenase</fullName>
        <ecNumber>1.3.1.28</ecNumber>
    </recommendedName>
</protein>
<keyword id="KW-0520">NAD</keyword>
<keyword id="KW-0560">Oxidoreductase</keyword>
<keyword id="KW-1185">Reference proteome</keyword>
<proteinExistence type="inferred from homology"/>
<sequence>MKDMSLVNSKVLLVGSARGIGFSVLEHLLQAGAQVMAADCEWQLLLEQSESLLGRYPDQLTLKKLDLAEPEAVREQVNQWAEQVAGFDHLVCCAGILHVAPLHEMPMEQVSSIFTVNAFGVLACMQGVASSMKARQQGSMVIIGSNAANTPRMSIGAYGASKAALHMLVKCIGMELAPYGIRCNLVSPGSTRTAMQQQLWTEQYGEAQVIAGDAAQFRLGIPLNKIAEPADIAQAVLFLLSDNAGHITLHDLRVDGGATLDH</sequence>
<evidence type="ECO:0000250" key="1"/>
<evidence type="ECO:0000255" key="2">
    <source>
        <dbReference type="PROSITE-ProRule" id="PRU10001"/>
    </source>
</evidence>
<evidence type="ECO:0000305" key="3"/>
<reference key="1">
    <citation type="journal article" date="1997" name="J. Bacteriol.">
        <title>Cloning of a Vibrio cholerae vibriobactin gene cluster: identification of genes required for early steps in siderophore biosynthesis.</title>
        <authorList>
            <person name="Wyckoff E.E."/>
            <person name="Stoebner J.A."/>
            <person name="Reed K.E."/>
            <person name="Payne S.M."/>
        </authorList>
    </citation>
    <scope>NUCLEOTIDE SEQUENCE [GENOMIC DNA]</scope>
    <source>
        <strain>El Tor Lou15</strain>
    </source>
</reference>
<reference key="2">
    <citation type="journal article" date="2000" name="Nature">
        <title>DNA sequence of both chromosomes of the cholera pathogen Vibrio cholerae.</title>
        <authorList>
            <person name="Heidelberg J.F."/>
            <person name="Eisen J.A."/>
            <person name="Nelson W.C."/>
            <person name="Clayton R.A."/>
            <person name="Gwinn M.L."/>
            <person name="Dodson R.J."/>
            <person name="Haft D.H."/>
            <person name="Hickey E.K."/>
            <person name="Peterson J.D."/>
            <person name="Umayam L.A."/>
            <person name="Gill S.R."/>
            <person name="Nelson K.E."/>
            <person name="Read T.D."/>
            <person name="Tettelin H."/>
            <person name="Richardson D.L."/>
            <person name="Ermolaeva M.D."/>
            <person name="Vamathevan J.J."/>
            <person name="Bass S."/>
            <person name="Qin H."/>
            <person name="Dragoi I."/>
            <person name="Sellers P."/>
            <person name="McDonald L.A."/>
            <person name="Utterback T.R."/>
            <person name="Fleischmann R.D."/>
            <person name="Nierman W.C."/>
            <person name="White O."/>
            <person name="Salzberg S.L."/>
            <person name="Smith H.O."/>
            <person name="Colwell R.R."/>
            <person name="Mekalanos J.J."/>
            <person name="Venter J.C."/>
            <person name="Fraser C.M."/>
        </authorList>
    </citation>
    <scope>NUCLEOTIDE SEQUENCE [LARGE SCALE GENOMIC DNA]</scope>
    <source>
        <strain>ATCC 39315 / El Tor Inaba N16961</strain>
    </source>
</reference>
<comment type="function">
    <text>Involved in an early step of the biosynthesis of the catechol siderophore vibriobactin. Vibriobactin is a chelating compound involved in transporting iron from the bacterial environment into the cell cytoplasm.</text>
</comment>
<comment type="catalytic activity">
    <reaction>
        <text>(2S,3S)-2,3-dihydroxy-2,3-dihydrobenzoate + NAD(+) = 2,3-dihydroxybenzoate + NADH + H(+)</text>
        <dbReference type="Rhea" id="RHEA:23824"/>
        <dbReference type="ChEBI" id="CHEBI:15378"/>
        <dbReference type="ChEBI" id="CHEBI:36654"/>
        <dbReference type="ChEBI" id="CHEBI:57540"/>
        <dbReference type="ChEBI" id="CHEBI:57945"/>
        <dbReference type="ChEBI" id="CHEBI:58764"/>
        <dbReference type="EC" id="1.3.1.28"/>
    </reaction>
</comment>
<comment type="pathway">
    <text>Siderophore biosynthesis; vibriobactin biosynthesis.</text>
</comment>
<comment type="similarity">
    <text evidence="3">Belongs to the short-chain dehydrogenases/reductases (SDR) family.</text>
</comment>
<comment type="caution">
    <text evidence="3">It is uncertain whether Met-1 or Met-4 is the initiator.</text>
</comment>
<organism>
    <name type="scientific">Vibrio cholerae serotype O1 (strain ATCC 39315 / El Tor Inaba N16961)</name>
    <dbReference type="NCBI Taxonomy" id="243277"/>
    <lineage>
        <taxon>Bacteria</taxon>
        <taxon>Pseudomonadati</taxon>
        <taxon>Pseudomonadota</taxon>
        <taxon>Gammaproteobacteria</taxon>
        <taxon>Vibrionales</taxon>
        <taxon>Vibrionaceae</taxon>
        <taxon>Vibrio</taxon>
    </lineage>
</organism>
<name>VIBA_VIBCH</name>
<feature type="chain" id="PRO_0000054808" description="Vibriobactin-specific 2,3-dihydro-2,3-dihydroxybenzoate dehydrogenase">
    <location>
        <begin position="1"/>
        <end position="262"/>
    </location>
</feature>
<feature type="active site" description="Proton acceptor" evidence="2">
    <location>
        <position position="158"/>
    </location>
</feature>
<feature type="binding site" evidence="1">
    <location>
        <begin position="12"/>
        <end position="36"/>
    </location>
    <ligand>
        <name>NAD(+)</name>
        <dbReference type="ChEBI" id="CHEBI:57540"/>
    </ligand>
</feature>
<feature type="binding site" evidence="1">
    <location>
        <position position="145"/>
    </location>
    <ligand>
        <name>substrate</name>
    </ligand>
</feature>